<comment type="function">
    <text evidence="1">Plays an important role in the de novo pathway of purine nucleotide biosynthesis. Catalyzes the first committed step in the biosynthesis of AMP from IMP.</text>
</comment>
<comment type="catalytic activity">
    <reaction evidence="1">
        <text>IMP + L-aspartate + GTP = N(6)-(1,2-dicarboxyethyl)-AMP + GDP + phosphate + 2 H(+)</text>
        <dbReference type="Rhea" id="RHEA:15753"/>
        <dbReference type="ChEBI" id="CHEBI:15378"/>
        <dbReference type="ChEBI" id="CHEBI:29991"/>
        <dbReference type="ChEBI" id="CHEBI:37565"/>
        <dbReference type="ChEBI" id="CHEBI:43474"/>
        <dbReference type="ChEBI" id="CHEBI:57567"/>
        <dbReference type="ChEBI" id="CHEBI:58053"/>
        <dbReference type="ChEBI" id="CHEBI:58189"/>
        <dbReference type="EC" id="6.3.4.4"/>
    </reaction>
</comment>
<comment type="cofactor">
    <cofactor evidence="1">
        <name>Mg(2+)</name>
        <dbReference type="ChEBI" id="CHEBI:18420"/>
    </cofactor>
    <text evidence="1">Binds 1 Mg(2+) ion per subunit.</text>
</comment>
<comment type="pathway">
    <text evidence="1">Purine metabolism; AMP biosynthesis via de novo pathway; AMP from IMP: step 1/2.</text>
</comment>
<comment type="subunit">
    <text evidence="1">Homodimer.</text>
</comment>
<comment type="subcellular location">
    <subcellularLocation>
        <location evidence="1">Cytoplasm</location>
    </subcellularLocation>
</comment>
<comment type="similarity">
    <text evidence="1">Belongs to the adenylosuccinate synthetase family.</text>
</comment>
<accession>A7H0A8</accession>
<feature type="chain" id="PRO_1000000794" description="Adenylosuccinate synthetase">
    <location>
        <begin position="1"/>
        <end position="416"/>
    </location>
</feature>
<feature type="active site" description="Proton acceptor" evidence="1">
    <location>
        <position position="14"/>
    </location>
</feature>
<feature type="active site" description="Proton donor" evidence="1">
    <location>
        <position position="42"/>
    </location>
</feature>
<feature type="binding site" evidence="1">
    <location>
        <begin position="13"/>
        <end position="19"/>
    </location>
    <ligand>
        <name>GTP</name>
        <dbReference type="ChEBI" id="CHEBI:37565"/>
    </ligand>
</feature>
<feature type="binding site" description="in other chain" evidence="1">
    <location>
        <begin position="14"/>
        <end position="17"/>
    </location>
    <ligand>
        <name>IMP</name>
        <dbReference type="ChEBI" id="CHEBI:58053"/>
        <note>ligand shared between dimeric partners</note>
    </ligand>
</feature>
<feature type="binding site" evidence="1">
    <location>
        <position position="14"/>
    </location>
    <ligand>
        <name>Mg(2+)</name>
        <dbReference type="ChEBI" id="CHEBI:18420"/>
    </ligand>
</feature>
<feature type="binding site" description="in other chain" evidence="1">
    <location>
        <begin position="39"/>
        <end position="42"/>
    </location>
    <ligand>
        <name>IMP</name>
        <dbReference type="ChEBI" id="CHEBI:58053"/>
        <note>ligand shared between dimeric partners</note>
    </ligand>
</feature>
<feature type="binding site" evidence="1">
    <location>
        <begin position="41"/>
        <end position="43"/>
    </location>
    <ligand>
        <name>GTP</name>
        <dbReference type="ChEBI" id="CHEBI:37565"/>
    </ligand>
</feature>
<feature type="binding site" evidence="1">
    <location>
        <position position="41"/>
    </location>
    <ligand>
        <name>Mg(2+)</name>
        <dbReference type="ChEBI" id="CHEBI:18420"/>
    </ligand>
</feature>
<feature type="binding site" description="in other chain" evidence="1">
    <location>
        <position position="126"/>
    </location>
    <ligand>
        <name>IMP</name>
        <dbReference type="ChEBI" id="CHEBI:58053"/>
        <note>ligand shared between dimeric partners</note>
    </ligand>
</feature>
<feature type="binding site" evidence="1">
    <location>
        <position position="140"/>
    </location>
    <ligand>
        <name>IMP</name>
        <dbReference type="ChEBI" id="CHEBI:58053"/>
        <note>ligand shared between dimeric partners</note>
    </ligand>
</feature>
<feature type="binding site" description="in other chain" evidence="1">
    <location>
        <position position="220"/>
    </location>
    <ligand>
        <name>IMP</name>
        <dbReference type="ChEBI" id="CHEBI:58053"/>
        <note>ligand shared between dimeric partners</note>
    </ligand>
</feature>
<feature type="binding site" description="in other chain" evidence="1">
    <location>
        <position position="235"/>
    </location>
    <ligand>
        <name>IMP</name>
        <dbReference type="ChEBI" id="CHEBI:58053"/>
        <note>ligand shared between dimeric partners</note>
    </ligand>
</feature>
<feature type="binding site" evidence="1">
    <location>
        <begin position="295"/>
        <end position="301"/>
    </location>
    <ligand>
        <name>substrate</name>
    </ligand>
</feature>
<feature type="binding site" description="in other chain" evidence="1">
    <location>
        <position position="299"/>
    </location>
    <ligand>
        <name>IMP</name>
        <dbReference type="ChEBI" id="CHEBI:58053"/>
        <note>ligand shared between dimeric partners</note>
    </ligand>
</feature>
<feature type="binding site" evidence="1">
    <location>
        <position position="301"/>
    </location>
    <ligand>
        <name>GTP</name>
        <dbReference type="ChEBI" id="CHEBI:37565"/>
    </ligand>
</feature>
<feature type="binding site" evidence="1">
    <location>
        <begin position="327"/>
        <end position="329"/>
    </location>
    <ligand>
        <name>GTP</name>
        <dbReference type="ChEBI" id="CHEBI:37565"/>
    </ligand>
</feature>
<feature type="binding site" evidence="1">
    <location>
        <begin position="405"/>
        <end position="407"/>
    </location>
    <ligand>
        <name>GTP</name>
        <dbReference type="ChEBI" id="CHEBI:37565"/>
    </ligand>
</feature>
<keyword id="KW-0963">Cytoplasm</keyword>
<keyword id="KW-0342">GTP-binding</keyword>
<keyword id="KW-0436">Ligase</keyword>
<keyword id="KW-0460">Magnesium</keyword>
<keyword id="KW-0479">Metal-binding</keyword>
<keyword id="KW-0547">Nucleotide-binding</keyword>
<keyword id="KW-0658">Purine biosynthesis</keyword>
<keyword id="KW-1185">Reference proteome</keyword>
<name>PURA_CAMC5</name>
<evidence type="ECO:0000255" key="1">
    <source>
        <dbReference type="HAMAP-Rule" id="MF_00011"/>
    </source>
</evidence>
<sequence>MRKADLVVGVQWGDEGKGKIVDMLGLNYDMICRSQGGHNAGHTIWVDGVRYAMHLIPSGILHKNIVNVIGNGVVVSPDVLIDEMAQFDHLEGRFYISDRAHLNLTHHGLIDQAKERLKGDKAIGTTGKGIGPTYADKISRSGHRVGELLEPERLCEALMSDFEMNKSLFNALGVKIPKRDELLEELKRYKEALAPYITNTTRLVWKALDDGKKVLLEGAQGTLLDIDHGTYPYVTSSNTISAGACTGLGLNPKEMGEVIGVIKAYTTRVGFGPFPTEDKGSDGDKMCEVGKEFGTTTGRRRRCGWFDAVSVKYASRLDAVDKYALMKLDVLDGFEVVKICKAYQYNGETIDYVPTDLENVTPIYEDLEGWDSVKGVTRYDDLPKNAKRYIERIEELTGVKVGLISTSPERSDTIIR</sequence>
<gene>
    <name evidence="1" type="primary">purA</name>
    <name type="ordered locus">Ccur92_15960</name>
    <name type="ORF">CCV52592_1784</name>
</gene>
<proteinExistence type="inferred from homology"/>
<dbReference type="EC" id="6.3.4.4" evidence="1"/>
<dbReference type="EMBL" id="CP000767">
    <property type="protein sequence ID" value="EAT99575.1"/>
    <property type="molecule type" value="Genomic_DNA"/>
</dbReference>
<dbReference type="RefSeq" id="WP_009650792.1">
    <property type="nucleotide sequence ID" value="NC_009715.2"/>
</dbReference>
<dbReference type="SMR" id="A7H0A8"/>
<dbReference type="STRING" id="360105.CCV52592_1784"/>
<dbReference type="KEGG" id="ccv:CCV52592_1784"/>
<dbReference type="HOGENOM" id="CLU_029848_0_0_7"/>
<dbReference type="OrthoDB" id="9807553at2"/>
<dbReference type="UniPathway" id="UPA00075">
    <property type="reaction ID" value="UER00335"/>
</dbReference>
<dbReference type="Proteomes" id="UP000006380">
    <property type="component" value="Chromosome"/>
</dbReference>
<dbReference type="GO" id="GO:0005737">
    <property type="term" value="C:cytoplasm"/>
    <property type="evidence" value="ECO:0007669"/>
    <property type="project" value="UniProtKB-SubCell"/>
</dbReference>
<dbReference type="GO" id="GO:0004019">
    <property type="term" value="F:adenylosuccinate synthase activity"/>
    <property type="evidence" value="ECO:0007669"/>
    <property type="project" value="UniProtKB-UniRule"/>
</dbReference>
<dbReference type="GO" id="GO:0005525">
    <property type="term" value="F:GTP binding"/>
    <property type="evidence" value="ECO:0007669"/>
    <property type="project" value="UniProtKB-UniRule"/>
</dbReference>
<dbReference type="GO" id="GO:0000287">
    <property type="term" value="F:magnesium ion binding"/>
    <property type="evidence" value="ECO:0007669"/>
    <property type="project" value="UniProtKB-UniRule"/>
</dbReference>
<dbReference type="GO" id="GO:0044208">
    <property type="term" value="P:'de novo' AMP biosynthetic process"/>
    <property type="evidence" value="ECO:0007669"/>
    <property type="project" value="UniProtKB-UniRule"/>
</dbReference>
<dbReference type="GO" id="GO:0046040">
    <property type="term" value="P:IMP metabolic process"/>
    <property type="evidence" value="ECO:0007669"/>
    <property type="project" value="TreeGrafter"/>
</dbReference>
<dbReference type="CDD" id="cd03108">
    <property type="entry name" value="AdSS"/>
    <property type="match status" value="1"/>
</dbReference>
<dbReference type="FunFam" id="1.10.300.10:FF:000001">
    <property type="entry name" value="Adenylosuccinate synthetase"/>
    <property type="match status" value="1"/>
</dbReference>
<dbReference type="FunFam" id="3.90.170.10:FF:000001">
    <property type="entry name" value="Adenylosuccinate synthetase"/>
    <property type="match status" value="1"/>
</dbReference>
<dbReference type="Gene3D" id="3.40.440.10">
    <property type="entry name" value="Adenylosuccinate Synthetase, subunit A, domain 1"/>
    <property type="match status" value="1"/>
</dbReference>
<dbReference type="Gene3D" id="1.10.300.10">
    <property type="entry name" value="Adenylosuccinate Synthetase, subunit A, domain 2"/>
    <property type="match status" value="1"/>
</dbReference>
<dbReference type="Gene3D" id="3.90.170.10">
    <property type="entry name" value="Adenylosuccinate Synthetase, subunit A, domain 3"/>
    <property type="match status" value="1"/>
</dbReference>
<dbReference type="HAMAP" id="MF_00011">
    <property type="entry name" value="Adenylosucc_synth"/>
    <property type="match status" value="1"/>
</dbReference>
<dbReference type="InterPro" id="IPR018220">
    <property type="entry name" value="Adenylosuccin_syn_GTP-bd"/>
</dbReference>
<dbReference type="InterPro" id="IPR033128">
    <property type="entry name" value="Adenylosuccin_syn_Lys_AS"/>
</dbReference>
<dbReference type="InterPro" id="IPR042109">
    <property type="entry name" value="Adenylosuccinate_synth_dom1"/>
</dbReference>
<dbReference type="InterPro" id="IPR042110">
    <property type="entry name" value="Adenylosuccinate_synth_dom2"/>
</dbReference>
<dbReference type="InterPro" id="IPR042111">
    <property type="entry name" value="Adenylosuccinate_synth_dom3"/>
</dbReference>
<dbReference type="InterPro" id="IPR001114">
    <property type="entry name" value="Adenylosuccinate_synthetase"/>
</dbReference>
<dbReference type="InterPro" id="IPR027417">
    <property type="entry name" value="P-loop_NTPase"/>
</dbReference>
<dbReference type="NCBIfam" id="NF002223">
    <property type="entry name" value="PRK01117.1"/>
    <property type="match status" value="1"/>
</dbReference>
<dbReference type="NCBIfam" id="TIGR00184">
    <property type="entry name" value="purA"/>
    <property type="match status" value="1"/>
</dbReference>
<dbReference type="PANTHER" id="PTHR11846">
    <property type="entry name" value="ADENYLOSUCCINATE SYNTHETASE"/>
    <property type="match status" value="1"/>
</dbReference>
<dbReference type="PANTHER" id="PTHR11846:SF0">
    <property type="entry name" value="ADENYLOSUCCINATE SYNTHETASE"/>
    <property type="match status" value="1"/>
</dbReference>
<dbReference type="Pfam" id="PF00709">
    <property type="entry name" value="Adenylsucc_synt"/>
    <property type="match status" value="1"/>
</dbReference>
<dbReference type="SMART" id="SM00788">
    <property type="entry name" value="Adenylsucc_synt"/>
    <property type="match status" value="1"/>
</dbReference>
<dbReference type="SUPFAM" id="SSF52540">
    <property type="entry name" value="P-loop containing nucleoside triphosphate hydrolases"/>
    <property type="match status" value="1"/>
</dbReference>
<dbReference type="PROSITE" id="PS01266">
    <property type="entry name" value="ADENYLOSUCCIN_SYN_1"/>
    <property type="match status" value="1"/>
</dbReference>
<dbReference type="PROSITE" id="PS00513">
    <property type="entry name" value="ADENYLOSUCCIN_SYN_2"/>
    <property type="match status" value="1"/>
</dbReference>
<protein>
    <recommendedName>
        <fullName evidence="1">Adenylosuccinate synthetase</fullName>
        <shortName evidence="1">AMPSase</shortName>
        <shortName evidence="1">AdSS</shortName>
        <ecNumber evidence="1">6.3.4.4</ecNumber>
    </recommendedName>
    <alternativeName>
        <fullName evidence="1">IMP--aspartate ligase</fullName>
    </alternativeName>
</protein>
<reference key="1">
    <citation type="submission" date="2007-07" db="EMBL/GenBank/DDBJ databases">
        <title>Genome sequence of Campylobacter curvus 525.92 isolated from human feces.</title>
        <authorList>
            <person name="Fouts D.E."/>
            <person name="Mongodin E.F."/>
            <person name="Puiu D."/>
            <person name="Sebastian Y."/>
            <person name="Miller W.G."/>
            <person name="Mandrell R.E."/>
            <person name="Lastovica A.J."/>
            <person name="Nelson K.E."/>
        </authorList>
    </citation>
    <scope>NUCLEOTIDE SEQUENCE [LARGE SCALE GENOMIC DNA]</scope>
    <source>
        <strain>525.92</strain>
    </source>
</reference>
<organism>
    <name type="scientific">Campylobacter curvus (strain 525.92)</name>
    <dbReference type="NCBI Taxonomy" id="360105"/>
    <lineage>
        <taxon>Bacteria</taxon>
        <taxon>Pseudomonadati</taxon>
        <taxon>Campylobacterota</taxon>
        <taxon>Epsilonproteobacteria</taxon>
        <taxon>Campylobacterales</taxon>
        <taxon>Campylobacteraceae</taxon>
        <taxon>Campylobacter</taxon>
    </lineage>
</organism>